<dbReference type="EMBL" id="CP000595">
    <property type="protein sequence ID" value="ABP00034.1"/>
    <property type="molecule type" value="Genomic_DNA"/>
</dbReference>
<dbReference type="RefSeq" id="XP_001421740.1">
    <property type="nucleotide sequence ID" value="XM_001421703.1"/>
</dbReference>
<dbReference type="EnsemblPlants" id="ABP00034">
    <property type="protein sequence ID" value="ABP00034"/>
    <property type="gene ID" value="OSTLU_27792"/>
</dbReference>
<dbReference type="GeneID" id="5005677"/>
<dbReference type="Gramene" id="ABP00034">
    <property type="protein sequence ID" value="ABP00034"/>
    <property type="gene ID" value="OSTLU_27792"/>
</dbReference>
<dbReference type="KEGG" id="olu:OSTLU_27792"/>
<dbReference type="HOGENOM" id="CLU_1339462_0_0_1"/>
<dbReference type="OMA" id="FYQFKGV"/>
<dbReference type="OrthoDB" id="10396524at2759"/>
<dbReference type="Proteomes" id="UP000001568">
    <property type="component" value="Chromosome 15"/>
</dbReference>
<dbReference type="GO" id="GO:0005886">
    <property type="term" value="C:plasma membrane"/>
    <property type="evidence" value="ECO:0007669"/>
    <property type="project" value="UniProtKB-SubCell"/>
</dbReference>
<reference key="1">
    <citation type="journal article" date="2007" name="Proc. Natl. Acad. Sci. U.S.A.">
        <title>The tiny eukaryote Ostreococcus provides genomic insights into the paradox of plankton speciation.</title>
        <authorList>
            <person name="Palenik B."/>
            <person name="Grimwood J."/>
            <person name="Aerts A."/>
            <person name="Rouze P."/>
            <person name="Salamov A."/>
            <person name="Putnam N."/>
            <person name="Dupont C."/>
            <person name="Jorgensen R."/>
            <person name="Derelle E."/>
            <person name="Rombauts S."/>
            <person name="Zhou K."/>
            <person name="Otillar R."/>
            <person name="Merchant S.S."/>
            <person name="Podell S."/>
            <person name="Gaasterland T."/>
            <person name="Napoli C."/>
            <person name="Gendler K."/>
            <person name="Manuell A."/>
            <person name="Tai V."/>
            <person name="Vallon O."/>
            <person name="Piganeau G."/>
            <person name="Jancek S."/>
            <person name="Heijde M."/>
            <person name="Jabbari K."/>
            <person name="Bowler C."/>
            <person name="Lohr M."/>
            <person name="Robbens S."/>
            <person name="Werner G."/>
            <person name="Dubchak I."/>
            <person name="Pazour G.J."/>
            <person name="Ren Q."/>
            <person name="Paulsen I."/>
            <person name="Delwiche C."/>
            <person name="Schmutz J."/>
            <person name="Rokhsar D."/>
            <person name="Van de Peer Y."/>
            <person name="Moreau H."/>
            <person name="Grigoriev I.V."/>
        </authorList>
    </citation>
    <scope>NUCLEOTIDE SEQUENCE [LARGE SCALE GENOMIC DNA]</scope>
    <source>
        <strain>CCE9901</strain>
    </source>
</reference>
<reference key="2">
    <citation type="journal article" date="2014" name="Plant Physiol.">
        <title>Functional and evolutionary analysis of the CASPARIAN STRIP MEMBRANE DOMAIN PROTEIN family.</title>
        <authorList>
            <person name="Roppolo D."/>
            <person name="Boeckmann B."/>
            <person name="Pfister A."/>
            <person name="Boutet E."/>
            <person name="Rubio M.C."/>
            <person name="Denervaud-Tendon V."/>
            <person name="Vermeer J.E."/>
            <person name="Gheyselinck J."/>
            <person name="Xenarios I."/>
            <person name="Geldner N."/>
        </authorList>
    </citation>
    <scope>GENE FAMILY</scope>
    <scope>NOMENCLATURE</scope>
</reference>
<keyword id="KW-1003">Cell membrane</keyword>
<keyword id="KW-0472">Membrane</keyword>
<keyword id="KW-1185">Reference proteome</keyword>
<keyword id="KW-0812">Transmembrane</keyword>
<keyword id="KW-1133">Transmembrane helix</keyword>
<gene>
    <name type="ORF">OSTLU_27792</name>
</gene>
<protein>
    <recommendedName>
        <fullName>CASP-like protein 0U1</fullName>
        <shortName>OlCASPL0U1</shortName>
    </recommendedName>
</protein>
<feature type="chain" id="PRO_0000418671" description="CASP-like protein 0U1">
    <location>
        <begin position="1"/>
        <end position="205"/>
    </location>
</feature>
<feature type="topological domain" description="Cytoplasmic" evidence="2">
    <location>
        <begin position="1"/>
        <end position="38"/>
    </location>
</feature>
<feature type="transmembrane region" description="Helical" evidence="2">
    <location>
        <begin position="39"/>
        <end position="57"/>
    </location>
</feature>
<feature type="topological domain" description="Extracellular" evidence="2">
    <location>
        <begin position="58"/>
        <end position="89"/>
    </location>
</feature>
<feature type="transmembrane region" description="Helical" evidence="2">
    <location>
        <begin position="90"/>
        <end position="110"/>
    </location>
</feature>
<feature type="topological domain" description="Cytoplasmic" evidence="2">
    <location>
        <begin position="111"/>
        <end position="124"/>
    </location>
</feature>
<feature type="transmembrane region" description="Helical" evidence="2">
    <location>
        <begin position="125"/>
        <end position="145"/>
    </location>
</feature>
<feature type="topological domain" description="Extracellular" evidence="2">
    <location>
        <begin position="146"/>
        <end position="159"/>
    </location>
</feature>
<feature type="transmembrane region" description="Helical" evidence="2">
    <location>
        <begin position="160"/>
        <end position="180"/>
    </location>
</feature>
<feature type="topological domain" description="Cytoplasmic" evidence="2">
    <location>
        <begin position="181"/>
        <end position="205"/>
    </location>
</feature>
<organism>
    <name type="scientific">Ostreococcus lucimarinus (strain CCE9901)</name>
    <dbReference type="NCBI Taxonomy" id="436017"/>
    <lineage>
        <taxon>Eukaryota</taxon>
        <taxon>Viridiplantae</taxon>
        <taxon>Chlorophyta</taxon>
        <taxon>Mamiellophyceae</taxon>
        <taxon>Mamiellales</taxon>
        <taxon>Bathycoccaceae</taxon>
        <taxon>Ostreococcus</taxon>
    </lineage>
</organism>
<accession>A4S8B7</accession>
<name>CSPL1_OSTLU</name>
<proteinExistence type="inferred from homology"/>
<comment type="subunit">
    <text evidence="1">Homodimer and heterodimers.</text>
</comment>
<comment type="subcellular location">
    <subcellularLocation>
        <location evidence="1">Cell membrane</location>
        <topology evidence="1">Multi-pass membrane protein</topology>
    </subcellularLocation>
</comment>
<comment type="similarity">
    <text evidence="3">Belongs to the Casparian strip membrane proteins (CASP) family.</text>
</comment>
<sequence>MDDAPGASDEAREPLLKRVGASVEGTSLMNHRLMKNPKFRALLVESLMALTTFSFMAKQTEGLAGPELSTLNDCGEAGCGFTKFYQFKGVVGVYAGFWAYTVILIAMYVIRKAPPPGTEFASYALFTAAMATFVVMSITECASVVLSSDYYVCKNADYSLVSLIFAAATIVLNCLTCAFAWRQWGELKFVGLPKTLSALTETYPG</sequence>
<evidence type="ECO:0000250" key="1"/>
<evidence type="ECO:0000255" key="2"/>
<evidence type="ECO:0000305" key="3"/>